<feature type="chain" id="PRO_1000052763" description="Large ribosomal subunit protein uL5">
    <location>
        <begin position="1"/>
        <end position="180"/>
    </location>
</feature>
<comment type="function">
    <text evidence="1">This is one of the proteins that bind and probably mediate the attachment of the 5S RNA into the large ribosomal subunit, where it forms part of the central protuberance. In the 70S ribosome it contacts protein S13 of the 30S subunit (bridge B1b), connecting the 2 subunits; this bridge is implicated in subunit movement. Contacts the P site tRNA; the 5S rRNA and some of its associated proteins might help stabilize positioning of ribosome-bound tRNAs.</text>
</comment>
<comment type="subunit">
    <text evidence="1">Part of the 50S ribosomal subunit; part of the 5S rRNA/L5/L18/L25 subcomplex. Contacts the 5S rRNA and the P site tRNA. Forms a bridge to the 30S subunit in the 70S ribosome.</text>
</comment>
<comment type="similarity">
    <text evidence="1">Belongs to the universal ribosomal protein uL5 family.</text>
</comment>
<gene>
    <name evidence="1" type="primary">rplE</name>
    <name type="ordered locus">LEUM_0208</name>
</gene>
<accession>Q03ZN3</accession>
<sequence length="180" mass="20166">MANALKEKYVNEVQPALIEKFNFKSSMQAPKIDKIVLNMGVGDAVSNSKNLDEAVEELKLIAGQQPVITKAKKSIAGFRLREGMSIGTKVTLRGERMYDFLDKLINISLPRVRDFRGVSSKAFDGRGNYTLGIREQLIFPEIDFDKVNRVRGLDIVIVTTAQNDEEGRELLTQMGMPFAK</sequence>
<keyword id="KW-1185">Reference proteome</keyword>
<keyword id="KW-0687">Ribonucleoprotein</keyword>
<keyword id="KW-0689">Ribosomal protein</keyword>
<keyword id="KW-0694">RNA-binding</keyword>
<keyword id="KW-0699">rRNA-binding</keyword>
<keyword id="KW-0820">tRNA-binding</keyword>
<organism>
    <name type="scientific">Leuconostoc mesenteroides subsp. mesenteroides (strain ATCC 8293 / DSM 20343 / BCRC 11652 / CCM 1803 / JCM 6124 / NCDO 523 / NBRC 100496 / NCIMB 8023 / NCTC 12954 / NRRL B-1118 / 37Y)</name>
    <dbReference type="NCBI Taxonomy" id="203120"/>
    <lineage>
        <taxon>Bacteria</taxon>
        <taxon>Bacillati</taxon>
        <taxon>Bacillota</taxon>
        <taxon>Bacilli</taxon>
        <taxon>Lactobacillales</taxon>
        <taxon>Lactobacillaceae</taxon>
        <taxon>Leuconostoc</taxon>
    </lineage>
</organism>
<name>RL5_LEUMM</name>
<dbReference type="EMBL" id="CP000414">
    <property type="protein sequence ID" value="ABJ61339.1"/>
    <property type="molecule type" value="Genomic_DNA"/>
</dbReference>
<dbReference type="RefSeq" id="WP_002816024.1">
    <property type="nucleotide sequence ID" value="NC_008531.1"/>
</dbReference>
<dbReference type="SMR" id="Q03ZN3"/>
<dbReference type="EnsemblBacteria" id="ABJ61339">
    <property type="protein sequence ID" value="ABJ61339"/>
    <property type="gene ID" value="LEUM_0208"/>
</dbReference>
<dbReference type="GeneID" id="97504969"/>
<dbReference type="KEGG" id="lme:LEUM_0208"/>
<dbReference type="eggNOG" id="COG0094">
    <property type="taxonomic scope" value="Bacteria"/>
</dbReference>
<dbReference type="HOGENOM" id="CLU_061015_2_1_9"/>
<dbReference type="Proteomes" id="UP000000362">
    <property type="component" value="Chromosome"/>
</dbReference>
<dbReference type="GO" id="GO:1990904">
    <property type="term" value="C:ribonucleoprotein complex"/>
    <property type="evidence" value="ECO:0007669"/>
    <property type="project" value="UniProtKB-KW"/>
</dbReference>
<dbReference type="GO" id="GO:0005840">
    <property type="term" value="C:ribosome"/>
    <property type="evidence" value="ECO:0007669"/>
    <property type="project" value="UniProtKB-KW"/>
</dbReference>
<dbReference type="GO" id="GO:0019843">
    <property type="term" value="F:rRNA binding"/>
    <property type="evidence" value="ECO:0007669"/>
    <property type="project" value="UniProtKB-UniRule"/>
</dbReference>
<dbReference type="GO" id="GO:0003735">
    <property type="term" value="F:structural constituent of ribosome"/>
    <property type="evidence" value="ECO:0007669"/>
    <property type="project" value="InterPro"/>
</dbReference>
<dbReference type="GO" id="GO:0000049">
    <property type="term" value="F:tRNA binding"/>
    <property type="evidence" value="ECO:0007669"/>
    <property type="project" value="UniProtKB-UniRule"/>
</dbReference>
<dbReference type="GO" id="GO:0006412">
    <property type="term" value="P:translation"/>
    <property type="evidence" value="ECO:0007669"/>
    <property type="project" value="UniProtKB-UniRule"/>
</dbReference>
<dbReference type="FunFam" id="3.30.1440.10:FF:000001">
    <property type="entry name" value="50S ribosomal protein L5"/>
    <property type="match status" value="1"/>
</dbReference>
<dbReference type="Gene3D" id="3.30.1440.10">
    <property type="match status" value="1"/>
</dbReference>
<dbReference type="HAMAP" id="MF_01333_B">
    <property type="entry name" value="Ribosomal_uL5_B"/>
    <property type="match status" value="1"/>
</dbReference>
<dbReference type="InterPro" id="IPR002132">
    <property type="entry name" value="Ribosomal_uL5"/>
</dbReference>
<dbReference type="InterPro" id="IPR020930">
    <property type="entry name" value="Ribosomal_uL5_bac-type"/>
</dbReference>
<dbReference type="InterPro" id="IPR031309">
    <property type="entry name" value="Ribosomal_uL5_C"/>
</dbReference>
<dbReference type="InterPro" id="IPR020929">
    <property type="entry name" value="Ribosomal_uL5_CS"/>
</dbReference>
<dbReference type="InterPro" id="IPR022803">
    <property type="entry name" value="Ribosomal_uL5_dom_sf"/>
</dbReference>
<dbReference type="InterPro" id="IPR031310">
    <property type="entry name" value="Ribosomal_uL5_N"/>
</dbReference>
<dbReference type="NCBIfam" id="NF000585">
    <property type="entry name" value="PRK00010.1"/>
    <property type="match status" value="1"/>
</dbReference>
<dbReference type="PANTHER" id="PTHR11994">
    <property type="entry name" value="60S RIBOSOMAL PROTEIN L11-RELATED"/>
    <property type="match status" value="1"/>
</dbReference>
<dbReference type="Pfam" id="PF00281">
    <property type="entry name" value="Ribosomal_L5"/>
    <property type="match status" value="1"/>
</dbReference>
<dbReference type="Pfam" id="PF00673">
    <property type="entry name" value="Ribosomal_L5_C"/>
    <property type="match status" value="1"/>
</dbReference>
<dbReference type="PIRSF" id="PIRSF002161">
    <property type="entry name" value="Ribosomal_L5"/>
    <property type="match status" value="1"/>
</dbReference>
<dbReference type="SUPFAM" id="SSF55282">
    <property type="entry name" value="RL5-like"/>
    <property type="match status" value="1"/>
</dbReference>
<dbReference type="PROSITE" id="PS00358">
    <property type="entry name" value="RIBOSOMAL_L5"/>
    <property type="match status" value="1"/>
</dbReference>
<proteinExistence type="inferred from homology"/>
<evidence type="ECO:0000255" key="1">
    <source>
        <dbReference type="HAMAP-Rule" id="MF_01333"/>
    </source>
</evidence>
<evidence type="ECO:0000305" key="2"/>
<protein>
    <recommendedName>
        <fullName evidence="1">Large ribosomal subunit protein uL5</fullName>
    </recommendedName>
    <alternativeName>
        <fullName evidence="2">50S ribosomal protein L5</fullName>
    </alternativeName>
</protein>
<reference key="1">
    <citation type="journal article" date="2006" name="Proc. Natl. Acad. Sci. U.S.A.">
        <title>Comparative genomics of the lactic acid bacteria.</title>
        <authorList>
            <person name="Makarova K.S."/>
            <person name="Slesarev A."/>
            <person name="Wolf Y.I."/>
            <person name="Sorokin A."/>
            <person name="Mirkin B."/>
            <person name="Koonin E.V."/>
            <person name="Pavlov A."/>
            <person name="Pavlova N."/>
            <person name="Karamychev V."/>
            <person name="Polouchine N."/>
            <person name="Shakhova V."/>
            <person name="Grigoriev I."/>
            <person name="Lou Y."/>
            <person name="Rohksar D."/>
            <person name="Lucas S."/>
            <person name="Huang K."/>
            <person name="Goodstein D.M."/>
            <person name="Hawkins T."/>
            <person name="Plengvidhya V."/>
            <person name="Welker D."/>
            <person name="Hughes J."/>
            <person name="Goh Y."/>
            <person name="Benson A."/>
            <person name="Baldwin K."/>
            <person name="Lee J.-H."/>
            <person name="Diaz-Muniz I."/>
            <person name="Dosti B."/>
            <person name="Smeianov V."/>
            <person name="Wechter W."/>
            <person name="Barabote R."/>
            <person name="Lorca G."/>
            <person name="Altermann E."/>
            <person name="Barrangou R."/>
            <person name="Ganesan B."/>
            <person name="Xie Y."/>
            <person name="Rawsthorne H."/>
            <person name="Tamir D."/>
            <person name="Parker C."/>
            <person name="Breidt F."/>
            <person name="Broadbent J.R."/>
            <person name="Hutkins R."/>
            <person name="O'Sullivan D."/>
            <person name="Steele J."/>
            <person name="Unlu G."/>
            <person name="Saier M.H. Jr."/>
            <person name="Klaenhammer T."/>
            <person name="Richardson P."/>
            <person name="Kozyavkin S."/>
            <person name="Weimer B.C."/>
            <person name="Mills D.A."/>
        </authorList>
    </citation>
    <scope>NUCLEOTIDE SEQUENCE [LARGE SCALE GENOMIC DNA]</scope>
    <source>
        <strain>ATCC 8293 / DSM 20343 / BCRC 11652 / CCM 1803 / JCM 6124 / NCDO 523 / NBRC 100496 / NCIMB 8023 / NCTC 12954 / NRRL B-1118 / 37Y</strain>
    </source>
</reference>